<feature type="chain" id="PRO_1000185367" description="Phosphoglucosamine mutase">
    <location>
        <begin position="1"/>
        <end position="445"/>
    </location>
</feature>
<feature type="active site" description="Phosphoserine intermediate" evidence="1">
    <location>
        <position position="102"/>
    </location>
</feature>
<feature type="binding site" description="via phosphate group" evidence="1">
    <location>
        <position position="102"/>
    </location>
    <ligand>
        <name>Mg(2+)</name>
        <dbReference type="ChEBI" id="CHEBI:18420"/>
    </ligand>
</feature>
<feature type="binding site" evidence="1">
    <location>
        <position position="241"/>
    </location>
    <ligand>
        <name>Mg(2+)</name>
        <dbReference type="ChEBI" id="CHEBI:18420"/>
    </ligand>
</feature>
<feature type="binding site" evidence="1">
    <location>
        <position position="243"/>
    </location>
    <ligand>
        <name>Mg(2+)</name>
        <dbReference type="ChEBI" id="CHEBI:18420"/>
    </ligand>
</feature>
<feature type="binding site" evidence="1">
    <location>
        <position position="245"/>
    </location>
    <ligand>
        <name>Mg(2+)</name>
        <dbReference type="ChEBI" id="CHEBI:18420"/>
    </ligand>
</feature>
<feature type="modified residue" description="Phosphoserine" evidence="1">
    <location>
        <position position="102"/>
    </location>
</feature>
<sequence>MSNRKYFGTDGIRGRVGDAPITPDFVLKLGWAAGKVLARHGSRKIIIGKDTRISGYMLESALEAGLAAAGLSALFTGPMPTPAVAYLTRTFRAEAGIVISASHNPFYDNGIKFFSIDGTKLPDAVEEAIEAEMEKEISCVDSAELGKASRIVDAAGRYIEFCKATFPNELSLSELKIVVDCANGATYHIAPNVLRELGANVIAIGCEPNGVNINAEVGATDVRALQARVLAEKADLGIAFDGDGDRVIMVDHEGNKVDGDQIMYIIAREGLRQGQLRGGAVGTLMSNMGLELALKQLGIPFARAKVGDRYVLEKMQEKGWRIGAENSGHVILLDKTTTGDGIVAGLQVLAAMARNHMSLHDLCSGMKMFPQILVNVRYTAGSGDPLEHESVKAVTAEVEVALGNRGRVLLRKSGTEPLIRVMVEGEDEAQVTEFAHRIADAVKAV</sequence>
<dbReference type="EC" id="5.4.2.10" evidence="1"/>
<dbReference type="EMBL" id="CU928145">
    <property type="protein sequence ID" value="CAU99808.1"/>
    <property type="molecule type" value="Genomic_DNA"/>
</dbReference>
<dbReference type="RefSeq" id="WP_000071141.1">
    <property type="nucleotide sequence ID" value="NC_011748.1"/>
</dbReference>
<dbReference type="SMR" id="B7LHN9"/>
<dbReference type="KEGG" id="eck:EC55989_3594"/>
<dbReference type="HOGENOM" id="CLU_016950_7_0_6"/>
<dbReference type="Proteomes" id="UP000000746">
    <property type="component" value="Chromosome"/>
</dbReference>
<dbReference type="GO" id="GO:0005829">
    <property type="term" value="C:cytosol"/>
    <property type="evidence" value="ECO:0007669"/>
    <property type="project" value="TreeGrafter"/>
</dbReference>
<dbReference type="GO" id="GO:0000287">
    <property type="term" value="F:magnesium ion binding"/>
    <property type="evidence" value="ECO:0007669"/>
    <property type="project" value="UniProtKB-UniRule"/>
</dbReference>
<dbReference type="GO" id="GO:0008966">
    <property type="term" value="F:phosphoglucosamine mutase activity"/>
    <property type="evidence" value="ECO:0007669"/>
    <property type="project" value="UniProtKB-UniRule"/>
</dbReference>
<dbReference type="GO" id="GO:0004615">
    <property type="term" value="F:phosphomannomutase activity"/>
    <property type="evidence" value="ECO:0007669"/>
    <property type="project" value="TreeGrafter"/>
</dbReference>
<dbReference type="GO" id="GO:0005975">
    <property type="term" value="P:carbohydrate metabolic process"/>
    <property type="evidence" value="ECO:0007669"/>
    <property type="project" value="InterPro"/>
</dbReference>
<dbReference type="GO" id="GO:0009252">
    <property type="term" value="P:peptidoglycan biosynthetic process"/>
    <property type="evidence" value="ECO:0007669"/>
    <property type="project" value="TreeGrafter"/>
</dbReference>
<dbReference type="GO" id="GO:0006048">
    <property type="term" value="P:UDP-N-acetylglucosamine biosynthetic process"/>
    <property type="evidence" value="ECO:0007669"/>
    <property type="project" value="TreeGrafter"/>
</dbReference>
<dbReference type="CDD" id="cd05802">
    <property type="entry name" value="GlmM"/>
    <property type="match status" value="1"/>
</dbReference>
<dbReference type="FunFam" id="3.30.310.50:FF:000001">
    <property type="entry name" value="Phosphoglucosamine mutase"/>
    <property type="match status" value="1"/>
</dbReference>
<dbReference type="FunFam" id="3.40.120.10:FF:000001">
    <property type="entry name" value="Phosphoglucosamine mutase"/>
    <property type="match status" value="1"/>
</dbReference>
<dbReference type="FunFam" id="3.40.120.10:FF:000002">
    <property type="entry name" value="Phosphoglucosamine mutase"/>
    <property type="match status" value="1"/>
</dbReference>
<dbReference type="Gene3D" id="3.40.120.10">
    <property type="entry name" value="Alpha-D-Glucose-1,6-Bisphosphate, subunit A, domain 3"/>
    <property type="match status" value="3"/>
</dbReference>
<dbReference type="Gene3D" id="3.30.310.50">
    <property type="entry name" value="Alpha-D-phosphohexomutase, C-terminal domain"/>
    <property type="match status" value="1"/>
</dbReference>
<dbReference type="HAMAP" id="MF_01554_B">
    <property type="entry name" value="GlmM_B"/>
    <property type="match status" value="1"/>
</dbReference>
<dbReference type="InterPro" id="IPR005844">
    <property type="entry name" value="A-D-PHexomutase_a/b/a-I"/>
</dbReference>
<dbReference type="InterPro" id="IPR016055">
    <property type="entry name" value="A-D-PHexomutase_a/b/a-I/II/III"/>
</dbReference>
<dbReference type="InterPro" id="IPR005845">
    <property type="entry name" value="A-D-PHexomutase_a/b/a-II"/>
</dbReference>
<dbReference type="InterPro" id="IPR005846">
    <property type="entry name" value="A-D-PHexomutase_a/b/a-III"/>
</dbReference>
<dbReference type="InterPro" id="IPR005843">
    <property type="entry name" value="A-D-PHexomutase_C"/>
</dbReference>
<dbReference type="InterPro" id="IPR036900">
    <property type="entry name" value="A-D-PHexomutase_C_sf"/>
</dbReference>
<dbReference type="InterPro" id="IPR016066">
    <property type="entry name" value="A-D-PHexomutase_CS"/>
</dbReference>
<dbReference type="InterPro" id="IPR005841">
    <property type="entry name" value="Alpha-D-phosphohexomutase_SF"/>
</dbReference>
<dbReference type="InterPro" id="IPR006352">
    <property type="entry name" value="GlmM_bact"/>
</dbReference>
<dbReference type="InterPro" id="IPR050060">
    <property type="entry name" value="Phosphoglucosamine_mutase"/>
</dbReference>
<dbReference type="NCBIfam" id="TIGR01455">
    <property type="entry name" value="glmM"/>
    <property type="match status" value="1"/>
</dbReference>
<dbReference type="NCBIfam" id="NF008139">
    <property type="entry name" value="PRK10887.1"/>
    <property type="match status" value="1"/>
</dbReference>
<dbReference type="PANTHER" id="PTHR42946:SF1">
    <property type="entry name" value="PHOSPHOGLUCOMUTASE (ALPHA-D-GLUCOSE-1,6-BISPHOSPHATE-DEPENDENT)"/>
    <property type="match status" value="1"/>
</dbReference>
<dbReference type="PANTHER" id="PTHR42946">
    <property type="entry name" value="PHOSPHOHEXOSE MUTASE"/>
    <property type="match status" value="1"/>
</dbReference>
<dbReference type="Pfam" id="PF02878">
    <property type="entry name" value="PGM_PMM_I"/>
    <property type="match status" value="1"/>
</dbReference>
<dbReference type="Pfam" id="PF02879">
    <property type="entry name" value="PGM_PMM_II"/>
    <property type="match status" value="1"/>
</dbReference>
<dbReference type="Pfam" id="PF02880">
    <property type="entry name" value="PGM_PMM_III"/>
    <property type="match status" value="1"/>
</dbReference>
<dbReference type="Pfam" id="PF00408">
    <property type="entry name" value="PGM_PMM_IV"/>
    <property type="match status" value="1"/>
</dbReference>
<dbReference type="PRINTS" id="PR00509">
    <property type="entry name" value="PGMPMM"/>
</dbReference>
<dbReference type="SUPFAM" id="SSF55957">
    <property type="entry name" value="Phosphoglucomutase, C-terminal domain"/>
    <property type="match status" value="1"/>
</dbReference>
<dbReference type="SUPFAM" id="SSF53738">
    <property type="entry name" value="Phosphoglucomutase, first 3 domains"/>
    <property type="match status" value="3"/>
</dbReference>
<dbReference type="PROSITE" id="PS00710">
    <property type="entry name" value="PGM_PMM"/>
    <property type="match status" value="1"/>
</dbReference>
<name>GLMM_ECO55</name>
<keyword id="KW-0413">Isomerase</keyword>
<keyword id="KW-0460">Magnesium</keyword>
<keyword id="KW-0479">Metal-binding</keyword>
<keyword id="KW-0597">Phosphoprotein</keyword>
<keyword id="KW-1185">Reference proteome</keyword>
<gene>
    <name evidence="1" type="primary">glmM</name>
    <name type="ordered locus">EC55989_3594</name>
</gene>
<protein>
    <recommendedName>
        <fullName evidence="1">Phosphoglucosamine mutase</fullName>
        <ecNumber evidence="1">5.4.2.10</ecNumber>
    </recommendedName>
</protein>
<accession>B7LHN9</accession>
<reference key="1">
    <citation type="journal article" date="2009" name="PLoS Genet.">
        <title>Organised genome dynamics in the Escherichia coli species results in highly diverse adaptive paths.</title>
        <authorList>
            <person name="Touchon M."/>
            <person name="Hoede C."/>
            <person name="Tenaillon O."/>
            <person name="Barbe V."/>
            <person name="Baeriswyl S."/>
            <person name="Bidet P."/>
            <person name="Bingen E."/>
            <person name="Bonacorsi S."/>
            <person name="Bouchier C."/>
            <person name="Bouvet O."/>
            <person name="Calteau A."/>
            <person name="Chiapello H."/>
            <person name="Clermont O."/>
            <person name="Cruveiller S."/>
            <person name="Danchin A."/>
            <person name="Diard M."/>
            <person name="Dossat C."/>
            <person name="Karoui M.E."/>
            <person name="Frapy E."/>
            <person name="Garry L."/>
            <person name="Ghigo J.M."/>
            <person name="Gilles A.M."/>
            <person name="Johnson J."/>
            <person name="Le Bouguenec C."/>
            <person name="Lescat M."/>
            <person name="Mangenot S."/>
            <person name="Martinez-Jehanne V."/>
            <person name="Matic I."/>
            <person name="Nassif X."/>
            <person name="Oztas S."/>
            <person name="Petit M.A."/>
            <person name="Pichon C."/>
            <person name="Rouy Z."/>
            <person name="Ruf C.S."/>
            <person name="Schneider D."/>
            <person name="Tourret J."/>
            <person name="Vacherie B."/>
            <person name="Vallenet D."/>
            <person name="Medigue C."/>
            <person name="Rocha E.P.C."/>
            <person name="Denamur E."/>
        </authorList>
    </citation>
    <scope>NUCLEOTIDE SEQUENCE [LARGE SCALE GENOMIC DNA]</scope>
    <source>
        <strain>55989 / EAEC</strain>
    </source>
</reference>
<comment type="function">
    <text evidence="1">Catalyzes the conversion of glucosamine-6-phosphate to glucosamine-1-phosphate.</text>
</comment>
<comment type="catalytic activity">
    <reaction evidence="1">
        <text>alpha-D-glucosamine 1-phosphate = D-glucosamine 6-phosphate</text>
        <dbReference type="Rhea" id="RHEA:23424"/>
        <dbReference type="ChEBI" id="CHEBI:58516"/>
        <dbReference type="ChEBI" id="CHEBI:58725"/>
        <dbReference type="EC" id="5.4.2.10"/>
    </reaction>
</comment>
<comment type="cofactor">
    <cofactor evidence="1">
        <name>Mg(2+)</name>
        <dbReference type="ChEBI" id="CHEBI:18420"/>
    </cofactor>
    <text evidence="1">Binds 1 Mg(2+) ion per subunit.</text>
</comment>
<comment type="PTM">
    <text evidence="1">Activated by phosphorylation.</text>
</comment>
<comment type="similarity">
    <text evidence="1">Belongs to the phosphohexose mutase family.</text>
</comment>
<organism>
    <name type="scientific">Escherichia coli (strain 55989 / EAEC)</name>
    <dbReference type="NCBI Taxonomy" id="585055"/>
    <lineage>
        <taxon>Bacteria</taxon>
        <taxon>Pseudomonadati</taxon>
        <taxon>Pseudomonadota</taxon>
        <taxon>Gammaproteobacteria</taxon>
        <taxon>Enterobacterales</taxon>
        <taxon>Enterobacteriaceae</taxon>
        <taxon>Escherichia</taxon>
    </lineage>
</organism>
<proteinExistence type="inferred from homology"/>
<evidence type="ECO:0000255" key="1">
    <source>
        <dbReference type="HAMAP-Rule" id="MF_01554"/>
    </source>
</evidence>